<comment type="function">
    <text evidence="1">Catalyzes the phosphorylation of pantothenate (Pan), the first step in CoA biosynthesis.</text>
</comment>
<comment type="catalytic activity">
    <reaction evidence="1">
        <text>(R)-pantothenate + ATP = (R)-4'-phosphopantothenate + ADP + H(+)</text>
        <dbReference type="Rhea" id="RHEA:16373"/>
        <dbReference type="ChEBI" id="CHEBI:10986"/>
        <dbReference type="ChEBI" id="CHEBI:15378"/>
        <dbReference type="ChEBI" id="CHEBI:29032"/>
        <dbReference type="ChEBI" id="CHEBI:30616"/>
        <dbReference type="ChEBI" id="CHEBI:456216"/>
        <dbReference type="EC" id="2.7.1.33"/>
    </reaction>
</comment>
<comment type="cofactor">
    <cofactor evidence="1">
        <name>NH4(+)</name>
        <dbReference type="ChEBI" id="CHEBI:28938"/>
    </cofactor>
    <cofactor evidence="1">
        <name>K(+)</name>
        <dbReference type="ChEBI" id="CHEBI:29103"/>
    </cofactor>
    <text evidence="1">A monovalent cation. Ammonium or potassium.</text>
</comment>
<comment type="pathway">
    <text evidence="1">Cofactor biosynthesis; coenzyme A biosynthesis; CoA from (R)-pantothenate: step 1/5.</text>
</comment>
<comment type="subunit">
    <text evidence="1">Homodimer.</text>
</comment>
<comment type="subcellular location">
    <subcellularLocation>
        <location evidence="1">Cytoplasm</location>
    </subcellularLocation>
</comment>
<comment type="similarity">
    <text evidence="1">Belongs to the type III pantothenate kinase family.</text>
</comment>
<dbReference type="EC" id="2.7.1.33" evidence="1"/>
<dbReference type="EMBL" id="AF467001">
    <property type="protein sequence ID" value="AAM74003.1"/>
    <property type="molecule type" value="Genomic_DNA"/>
</dbReference>
<dbReference type="EMBL" id="AL591974">
    <property type="protein sequence ID" value="CAD00748.1"/>
    <property type="molecule type" value="Genomic_DNA"/>
</dbReference>
<dbReference type="PIR" id="AF1102">
    <property type="entry name" value="AF1102"/>
</dbReference>
<dbReference type="RefSeq" id="NP_463752.1">
    <property type="nucleotide sequence ID" value="NC_003210.1"/>
</dbReference>
<dbReference type="RefSeq" id="WP_003723743.1">
    <property type="nucleotide sequence ID" value="NZ_CP149495.1"/>
</dbReference>
<dbReference type="SMR" id="Q8YAC5"/>
<dbReference type="STRING" id="169963.gene:17592857"/>
<dbReference type="MEROPS" id="M41.009"/>
<dbReference type="PaxDb" id="169963-lmo0221"/>
<dbReference type="EnsemblBacteria" id="CAD00748">
    <property type="protein sequence ID" value="CAD00748"/>
    <property type="gene ID" value="CAD00748"/>
</dbReference>
<dbReference type="GeneID" id="987060"/>
<dbReference type="KEGG" id="lmo:lmo0221"/>
<dbReference type="PATRIC" id="fig|169963.11.peg.226"/>
<dbReference type="eggNOG" id="COG1521">
    <property type="taxonomic scope" value="Bacteria"/>
</dbReference>
<dbReference type="HOGENOM" id="CLU_066627_1_0_9"/>
<dbReference type="OrthoDB" id="9804707at2"/>
<dbReference type="PhylomeDB" id="Q8YAC5"/>
<dbReference type="BioCyc" id="LMON169963:LMO0221-MONOMER"/>
<dbReference type="UniPathway" id="UPA00241">
    <property type="reaction ID" value="UER00352"/>
</dbReference>
<dbReference type="Proteomes" id="UP000000817">
    <property type="component" value="Chromosome"/>
</dbReference>
<dbReference type="GO" id="GO:0005737">
    <property type="term" value="C:cytoplasm"/>
    <property type="evidence" value="ECO:0007669"/>
    <property type="project" value="UniProtKB-SubCell"/>
</dbReference>
<dbReference type="GO" id="GO:0005524">
    <property type="term" value="F:ATP binding"/>
    <property type="evidence" value="ECO:0007669"/>
    <property type="project" value="UniProtKB-UniRule"/>
</dbReference>
<dbReference type="GO" id="GO:0046872">
    <property type="term" value="F:metal ion binding"/>
    <property type="evidence" value="ECO:0007669"/>
    <property type="project" value="UniProtKB-KW"/>
</dbReference>
<dbReference type="GO" id="GO:0004594">
    <property type="term" value="F:pantothenate kinase activity"/>
    <property type="evidence" value="ECO:0007669"/>
    <property type="project" value="UniProtKB-UniRule"/>
</dbReference>
<dbReference type="GO" id="GO:0015937">
    <property type="term" value="P:coenzyme A biosynthetic process"/>
    <property type="evidence" value="ECO:0007669"/>
    <property type="project" value="UniProtKB-UniRule"/>
</dbReference>
<dbReference type="CDD" id="cd24015">
    <property type="entry name" value="ASKHA_NBD_PanK-III"/>
    <property type="match status" value="1"/>
</dbReference>
<dbReference type="Gene3D" id="3.30.420.40">
    <property type="match status" value="2"/>
</dbReference>
<dbReference type="HAMAP" id="MF_01274">
    <property type="entry name" value="Pantothen_kinase_3"/>
    <property type="match status" value="1"/>
</dbReference>
<dbReference type="InterPro" id="IPR043129">
    <property type="entry name" value="ATPase_NBD"/>
</dbReference>
<dbReference type="InterPro" id="IPR004619">
    <property type="entry name" value="Type_III_PanK"/>
</dbReference>
<dbReference type="NCBIfam" id="TIGR00671">
    <property type="entry name" value="baf"/>
    <property type="match status" value="1"/>
</dbReference>
<dbReference type="NCBIfam" id="NF009843">
    <property type="entry name" value="PRK13318.1-1"/>
    <property type="match status" value="1"/>
</dbReference>
<dbReference type="NCBIfam" id="NF009847">
    <property type="entry name" value="PRK13318.1-5"/>
    <property type="match status" value="1"/>
</dbReference>
<dbReference type="NCBIfam" id="NF009848">
    <property type="entry name" value="PRK13318.1-6"/>
    <property type="match status" value="1"/>
</dbReference>
<dbReference type="NCBIfam" id="NF009855">
    <property type="entry name" value="PRK13321.1"/>
    <property type="match status" value="1"/>
</dbReference>
<dbReference type="PANTHER" id="PTHR34265">
    <property type="entry name" value="TYPE III PANTOTHENATE KINASE"/>
    <property type="match status" value="1"/>
</dbReference>
<dbReference type="PANTHER" id="PTHR34265:SF1">
    <property type="entry name" value="TYPE III PANTOTHENATE KINASE"/>
    <property type="match status" value="1"/>
</dbReference>
<dbReference type="Pfam" id="PF03309">
    <property type="entry name" value="Pan_kinase"/>
    <property type="match status" value="1"/>
</dbReference>
<dbReference type="SUPFAM" id="SSF53067">
    <property type="entry name" value="Actin-like ATPase domain"/>
    <property type="match status" value="2"/>
</dbReference>
<organism>
    <name type="scientific">Listeria monocytogenes serovar 1/2a (strain ATCC BAA-679 / EGD-e)</name>
    <dbReference type="NCBI Taxonomy" id="169963"/>
    <lineage>
        <taxon>Bacteria</taxon>
        <taxon>Bacillati</taxon>
        <taxon>Bacillota</taxon>
        <taxon>Bacilli</taxon>
        <taxon>Bacillales</taxon>
        <taxon>Listeriaceae</taxon>
        <taxon>Listeria</taxon>
    </lineage>
</organism>
<proteinExistence type="inferred from homology"/>
<name>COAX_LISMO</name>
<keyword id="KW-0067">ATP-binding</keyword>
<keyword id="KW-0173">Coenzyme A biosynthesis</keyword>
<keyword id="KW-0963">Cytoplasm</keyword>
<keyword id="KW-0418">Kinase</keyword>
<keyword id="KW-0479">Metal-binding</keyword>
<keyword id="KW-0547">Nucleotide-binding</keyword>
<keyword id="KW-0630">Potassium</keyword>
<keyword id="KW-1185">Reference proteome</keyword>
<keyword id="KW-0808">Transferase</keyword>
<protein>
    <recommendedName>
        <fullName evidence="1">Type III pantothenate kinase</fullName>
        <ecNumber evidence="1">2.7.1.33</ecNumber>
    </recommendedName>
    <alternativeName>
        <fullName evidence="1">PanK-III</fullName>
    </alternativeName>
    <alternativeName>
        <fullName evidence="1">Pantothenic acid kinase</fullName>
    </alternativeName>
</protein>
<evidence type="ECO:0000255" key="1">
    <source>
        <dbReference type="HAMAP-Rule" id="MF_01274"/>
    </source>
</evidence>
<evidence type="ECO:0000305" key="2"/>
<reference key="1">
    <citation type="submission" date="2002-01" db="EMBL/GenBank/DDBJ databases">
        <authorList>
            <person name="Li G."/>
            <person name="Kathariou S."/>
        </authorList>
    </citation>
    <scope>NUCLEOTIDE SEQUENCE [GENOMIC DNA]</scope>
    <source>
        <strain>4b1</strain>
    </source>
</reference>
<reference key="2">
    <citation type="journal article" date="2001" name="Science">
        <title>Comparative genomics of Listeria species.</title>
        <authorList>
            <person name="Glaser P."/>
            <person name="Frangeul L."/>
            <person name="Buchrieser C."/>
            <person name="Rusniok C."/>
            <person name="Amend A."/>
            <person name="Baquero F."/>
            <person name="Berche P."/>
            <person name="Bloecker H."/>
            <person name="Brandt P."/>
            <person name="Chakraborty T."/>
            <person name="Charbit A."/>
            <person name="Chetouani F."/>
            <person name="Couve E."/>
            <person name="de Daruvar A."/>
            <person name="Dehoux P."/>
            <person name="Domann E."/>
            <person name="Dominguez-Bernal G."/>
            <person name="Duchaud E."/>
            <person name="Durant L."/>
            <person name="Dussurget O."/>
            <person name="Entian K.-D."/>
            <person name="Fsihi H."/>
            <person name="Garcia-del Portillo F."/>
            <person name="Garrido P."/>
            <person name="Gautier L."/>
            <person name="Goebel W."/>
            <person name="Gomez-Lopez N."/>
            <person name="Hain T."/>
            <person name="Hauf J."/>
            <person name="Jackson D."/>
            <person name="Jones L.-M."/>
            <person name="Kaerst U."/>
            <person name="Kreft J."/>
            <person name="Kuhn M."/>
            <person name="Kunst F."/>
            <person name="Kurapkat G."/>
            <person name="Madueno E."/>
            <person name="Maitournam A."/>
            <person name="Mata Vicente J."/>
            <person name="Ng E."/>
            <person name="Nedjari H."/>
            <person name="Nordsiek G."/>
            <person name="Novella S."/>
            <person name="de Pablos B."/>
            <person name="Perez-Diaz J.-C."/>
            <person name="Purcell R."/>
            <person name="Remmel B."/>
            <person name="Rose M."/>
            <person name="Schlueter T."/>
            <person name="Simoes N."/>
            <person name="Tierrez A."/>
            <person name="Vazquez-Boland J.-A."/>
            <person name="Voss H."/>
            <person name="Wehland J."/>
            <person name="Cossart P."/>
        </authorList>
    </citation>
    <scope>NUCLEOTIDE SEQUENCE [LARGE SCALE GENOMIC DNA]</scope>
    <source>
        <strain>ATCC BAA-679 / EGD-e</strain>
    </source>
</reference>
<gene>
    <name evidence="1" type="primary">coaX</name>
    <name type="ordered locus">lmo0221</name>
</gene>
<accession>Q8YAC5</accession>
<accession>Q8KU01</accession>
<feature type="chain" id="PRO_0000267557" description="Type III pantothenate kinase">
    <location>
        <begin position="1"/>
        <end position="259"/>
    </location>
</feature>
<feature type="active site" description="Proton acceptor" evidence="1">
    <location>
        <position position="109"/>
    </location>
</feature>
<feature type="binding site" evidence="1">
    <location>
        <begin position="6"/>
        <end position="13"/>
    </location>
    <ligand>
        <name>ATP</name>
        <dbReference type="ChEBI" id="CHEBI:30616"/>
    </ligand>
</feature>
<feature type="binding site" evidence="1">
    <location>
        <begin position="107"/>
        <end position="110"/>
    </location>
    <ligand>
        <name>substrate</name>
    </ligand>
</feature>
<feature type="binding site" evidence="1">
    <location>
        <position position="129"/>
    </location>
    <ligand>
        <name>K(+)</name>
        <dbReference type="ChEBI" id="CHEBI:29103"/>
    </ligand>
</feature>
<feature type="binding site" evidence="1">
    <location>
        <position position="132"/>
    </location>
    <ligand>
        <name>ATP</name>
        <dbReference type="ChEBI" id="CHEBI:30616"/>
    </ligand>
</feature>
<feature type="binding site" evidence="1">
    <location>
        <position position="184"/>
    </location>
    <ligand>
        <name>substrate</name>
    </ligand>
</feature>
<feature type="sequence conflict" description="In Ref. 1; AAM74003." evidence="2" ref="1">
    <original>S</original>
    <variation>N</variation>
    <location>
        <position position="177"/>
    </location>
</feature>
<feature type="sequence conflict" description="In Ref. 1; AAM74003." evidence="2" ref="1">
    <original>S</original>
    <variation>A</variation>
    <location>
        <position position="186"/>
    </location>
</feature>
<feature type="sequence conflict" description="In Ref. 1; AAM74003." evidence="2" ref="1">
    <original>M</original>
    <variation>I</variation>
    <location>
        <position position="207"/>
    </location>
</feature>
<sequence>MILVIDVGNTNCTVGVYEKQKLLKHWRMTTDRHRTSDELGMTVLNFFSYANLTPSDIQGIIISSVVPPIMHAMETMCVRYFNIRPLIVGPGIKTGLNLKVDNPREIGSDRIVNAVAASEEYGTPVIVVDFGTATTFCYIDESGVYQGGAIAPGIMISTEALYNRAAKLPRVDIAESSQIIGKSTVSSMQAGIFYGFVGQCEGIIAEMKKQSNASPVVVATGGLARMITEKSSAVDILDPFLTLKGLELLYRRNKPTTEK</sequence>